<reference key="1">
    <citation type="journal article" date="1997" name="Science">
        <title>The complete genome sequence of Escherichia coli K-12.</title>
        <authorList>
            <person name="Blattner F.R."/>
            <person name="Plunkett G. III"/>
            <person name="Bloch C.A."/>
            <person name="Perna N.T."/>
            <person name="Burland V."/>
            <person name="Riley M."/>
            <person name="Collado-Vides J."/>
            <person name="Glasner J.D."/>
            <person name="Rode C.K."/>
            <person name="Mayhew G.F."/>
            <person name="Gregor J."/>
            <person name="Davis N.W."/>
            <person name="Kirkpatrick H.A."/>
            <person name="Goeden M.A."/>
            <person name="Rose D.J."/>
            <person name="Mau B."/>
            <person name="Shao Y."/>
        </authorList>
    </citation>
    <scope>NUCLEOTIDE SEQUENCE [LARGE SCALE GENOMIC DNA]</scope>
    <source>
        <strain>K12 / MG1655 / ATCC 47076</strain>
    </source>
</reference>
<reference key="2">
    <citation type="journal article" date="2006" name="Mol. Syst. Biol.">
        <title>Highly accurate genome sequences of Escherichia coli K-12 strains MG1655 and W3110.</title>
        <authorList>
            <person name="Hayashi K."/>
            <person name="Morooka N."/>
            <person name="Yamamoto Y."/>
            <person name="Fujita K."/>
            <person name="Isono K."/>
            <person name="Choi S."/>
            <person name="Ohtsubo E."/>
            <person name="Baba T."/>
            <person name="Wanner B.L."/>
            <person name="Mori H."/>
            <person name="Horiuchi T."/>
        </authorList>
    </citation>
    <scope>NUCLEOTIDE SEQUENCE [LARGE SCALE GENOMIC DNA]</scope>
    <source>
        <strain>K12 / W3110 / ATCC 27325 / DSM 5911</strain>
    </source>
</reference>
<reference key="3">
    <citation type="journal article" date="2010" name="Environ. Microbiol.">
        <title>Escherichia coli K-12 possesses multiple cryptic but functional chaperone-usher fimbriae with distinct surface specificities.</title>
        <authorList>
            <person name="Korea C.G."/>
            <person name="Badouraly R."/>
            <person name="Prevost M.C."/>
            <person name="Ghigo J.M."/>
            <person name="Beloin C."/>
        </authorList>
    </citation>
    <scope>FUNCTION</scope>
    <scope>INDUCTION</scope>
    <scope>DISRUPTION PHENOTYPE</scope>
    <source>
        <strain>K12 / MG1655 / ATCC 47076</strain>
    </source>
</reference>
<gene>
    <name type="primary">yfcO</name>
    <name type="ordered locus">b2332</name>
    <name type="ordered locus">JW2329</name>
</gene>
<name>YFCO_ECOLI</name>
<accession>P76498</accession>
<accession>Q2MAL7</accession>
<sequence>MKILRWLFALVMLIATTEAMAAGHSVDVYYGYNGDSRNIATFNLKIMMPSAVYVGEYKSSQWLMTGEILQNVSWSGPPPAPSVKLIGYHQNINKASCPGLPSGWNCGYYTFEVIVSAEIESYFSCPWLVIMNDSEASPGGVTYQGPDSHDTICPSVSVQPYDVSWNENYVSKSKLLTLQSTGGVVEKTLSTYLMKDGKLCDSTQMNETGGYCRWVAQMITFTASGCDKAEVSVTPNRHPITDKQLHDMVVRVDTSSMQPIDSTCRFQYILNEL</sequence>
<feature type="signal peptide" evidence="1">
    <location>
        <begin position="1"/>
        <end position="21"/>
    </location>
</feature>
<feature type="chain" id="PRO_0000013879" description="Uncharacterized protein YfcO">
    <location>
        <begin position="22"/>
        <end position="273"/>
    </location>
</feature>
<protein>
    <recommendedName>
        <fullName>Uncharacterized protein YfcO</fullName>
    </recommendedName>
</protein>
<keyword id="KW-1185">Reference proteome</keyword>
<keyword id="KW-0732">Signal</keyword>
<proteinExistence type="evidence at transcript level"/>
<evidence type="ECO:0000255" key="1"/>
<evidence type="ECO:0000269" key="2">
    <source>
    </source>
</evidence>
<evidence type="ECO:0000305" key="3"/>
<evidence type="ECO:0000305" key="4">
    <source>
    </source>
</evidence>
<organism>
    <name type="scientific">Escherichia coli (strain K12)</name>
    <dbReference type="NCBI Taxonomy" id="83333"/>
    <lineage>
        <taxon>Bacteria</taxon>
        <taxon>Pseudomonadati</taxon>
        <taxon>Pseudomonadota</taxon>
        <taxon>Gammaproteobacteria</taxon>
        <taxon>Enterobacterales</taxon>
        <taxon>Enterobacteriaceae</taxon>
        <taxon>Escherichia</taxon>
    </lineage>
</organism>
<dbReference type="EMBL" id="U00096">
    <property type="protein sequence ID" value="AAC75392.2"/>
    <property type="molecule type" value="Genomic_DNA"/>
</dbReference>
<dbReference type="EMBL" id="AP009048">
    <property type="protein sequence ID" value="BAE76689.1"/>
    <property type="molecule type" value="Genomic_DNA"/>
</dbReference>
<dbReference type="PIR" id="B65006">
    <property type="entry name" value="B65006"/>
</dbReference>
<dbReference type="RefSeq" id="NP_416835.2">
    <property type="nucleotide sequence ID" value="NC_000913.3"/>
</dbReference>
<dbReference type="RefSeq" id="WP_000698745.1">
    <property type="nucleotide sequence ID" value="NZ_LN832404.1"/>
</dbReference>
<dbReference type="BioGRID" id="4260939">
    <property type="interactions" value="10"/>
</dbReference>
<dbReference type="FunCoup" id="P76498">
    <property type="interactions" value="23"/>
</dbReference>
<dbReference type="STRING" id="511145.b2332"/>
<dbReference type="PaxDb" id="511145-b2332"/>
<dbReference type="EnsemblBacteria" id="AAC75392">
    <property type="protein sequence ID" value="AAC75392"/>
    <property type="gene ID" value="b2332"/>
</dbReference>
<dbReference type="GeneID" id="946620"/>
<dbReference type="KEGG" id="ecj:JW2329"/>
<dbReference type="KEGG" id="eco:b2332"/>
<dbReference type="KEGG" id="ecoc:C3026_12990"/>
<dbReference type="PATRIC" id="fig|511145.12.peg.2428"/>
<dbReference type="EchoBASE" id="EB3871"/>
<dbReference type="eggNOG" id="ENOG503064I">
    <property type="taxonomic scope" value="Bacteria"/>
</dbReference>
<dbReference type="HOGENOM" id="CLU_095265_0_0_6"/>
<dbReference type="InParanoid" id="P76498"/>
<dbReference type="OMA" id="HGCPWLV"/>
<dbReference type="OrthoDB" id="6595070at2"/>
<dbReference type="PhylomeDB" id="P76498"/>
<dbReference type="BioCyc" id="EcoCyc:G7203-MONOMER"/>
<dbReference type="PHI-base" id="PHI:6598"/>
<dbReference type="PRO" id="PR:P76498"/>
<dbReference type="Proteomes" id="UP000000625">
    <property type="component" value="Chromosome"/>
</dbReference>
<dbReference type="GO" id="GO:0005829">
    <property type="term" value="C:cytosol"/>
    <property type="evidence" value="ECO:0000314"/>
    <property type="project" value="EcoCyc"/>
</dbReference>
<dbReference type="InterPro" id="IPR021407">
    <property type="entry name" value="DUF2544"/>
</dbReference>
<dbReference type="Pfam" id="PF11245">
    <property type="entry name" value="DUF2544"/>
    <property type="match status" value="1"/>
</dbReference>
<comment type="function">
    <text evidence="2">Part of the yfcOPQRSUV fimbrial operon. Could contribute to adhesion to various surfaces in specific environmental niches. Increases adhesion to eukaryotic T24 bladder epithelial cells in the absence of fim genes.</text>
</comment>
<comment type="induction">
    <text evidence="2">Expression is negatively regulated by H-NS and subjected to cAMP receptor protein (CRP)-mediated catabolite repression.</text>
</comment>
<comment type="disruption phenotype">
    <text evidence="2">Deletion of the operon under classical laboratory conditions does not result in any major effect on E.coli capacity to form biofilms compared with the wild-type strain.</text>
</comment>
<comment type="miscellaneous">
    <text evidence="4">The operon is cryptic under classical laboratory conditions, but is functional when constitutively expressed.</text>
</comment>
<comment type="similarity">
    <text evidence="3">To S.typhimurium YadU.</text>
</comment>